<protein>
    <recommendedName>
        <fullName>Uncharacterized protein HI_1718</fullName>
    </recommendedName>
</protein>
<keyword id="KW-1185">Reference proteome</keyword>
<accession>P44296</accession>
<organism>
    <name type="scientific">Haemophilus influenzae (strain ATCC 51907 / DSM 11121 / KW20 / Rd)</name>
    <dbReference type="NCBI Taxonomy" id="71421"/>
    <lineage>
        <taxon>Bacteria</taxon>
        <taxon>Pseudomonadati</taxon>
        <taxon>Pseudomonadota</taxon>
        <taxon>Gammaproteobacteria</taxon>
        <taxon>Pasteurellales</taxon>
        <taxon>Pasteurellaceae</taxon>
        <taxon>Haemophilus</taxon>
    </lineage>
</organism>
<proteinExistence type="predicted"/>
<reference key="1">
    <citation type="journal article" date="1995" name="Science">
        <title>Whole-genome random sequencing and assembly of Haemophilus influenzae Rd.</title>
        <authorList>
            <person name="Fleischmann R.D."/>
            <person name="Adams M.D."/>
            <person name="White O."/>
            <person name="Clayton R.A."/>
            <person name="Kirkness E.F."/>
            <person name="Kerlavage A.R."/>
            <person name="Bult C.J."/>
            <person name="Tomb J.-F."/>
            <person name="Dougherty B.A."/>
            <person name="Merrick J.M."/>
            <person name="McKenney K."/>
            <person name="Sutton G.G."/>
            <person name="FitzHugh W."/>
            <person name="Fields C.A."/>
            <person name="Gocayne J.D."/>
            <person name="Scott J.D."/>
            <person name="Shirley R."/>
            <person name="Liu L.-I."/>
            <person name="Glodek A."/>
            <person name="Kelley J.M."/>
            <person name="Weidman J.F."/>
            <person name="Phillips C.A."/>
            <person name="Spriggs T."/>
            <person name="Hedblom E."/>
            <person name="Cotton M.D."/>
            <person name="Utterback T.R."/>
            <person name="Hanna M.C."/>
            <person name="Nguyen D.T."/>
            <person name="Saudek D.M."/>
            <person name="Brandon R.C."/>
            <person name="Fine L.D."/>
            <person name="Fritchman J.L."/>
            <person name="Fuhrmann J.L."/>
            <person name="Geoghagen N.S.M."/>
            <person name="Gnehm C.L."/>
            <person name="McDonald L.A."/>
            <person name="Small K.V."/>
            <person name="Fraser C.M."/>
            <person name="Smith H.O."/>
            <person name="Venter J.C."/>
        </authorList>
    </citation>
    <scope>NUCLEOTIDE SEQUENCE [LARGE SCALE GENOMIC DNA]</scope>
    <source>
        <strain>ATCC 51907 / DSM 11121 / KW20 / Rd</strain>
    </source>
</reference>
<gene>
    <name type="ordered locus">HI_1718</name>
</gene>
<name>Y1718_HAEIN</name>
<dbReference type="EMBL" id="L42023">
    <property type="protein sequence ID" value="AAC23365.1"/>
    <property type="molecule type" value="Genomic_DNA"/>
</dbReference>
<dbReference type="PIR" id="I64040">
    <property type="entry name" value="I64040"/>
</dbReference>
<dbReference type="SMR" id="P44296"/>
<dbReference type="STRING" id="71421.HI_1718"/>
<dbReference type="EnsemblBacteria" id="AAC23365">
    <property type="protein sequence ID" value="AAC23365"/>
    <property type="gene ID" value="HI_1718"/>
</dbReference>
<dbReference type="KEGG" id="hin:HI_1718"/>
<dbReference type="HOGENOM" id="CLU_1064626_0_0_6"/>
<dbReference type="Proteomes" id="UP000000579">
    <property type="component" value="Chromosome"/>
</dbReference>
<dbReference type="Gene3D" id="2.150.10.10">
    <property type="entry name" value="Serralysin-like metalloprotease, C-terminal"/>
    <property type="match status" value="1"/>
</dbReference>
<dbReference type="InterPro" id="IPR011049">
    <property type="entry name" value="Serralysin-like_metalloprot_C"/>
</dbReference>
<dbReference type="SUPFAM" id="SSF101967">
    <property type="entry name" value="Adhesin YadA, collagen-binding domain"/>
    <property type="match status" value="1"/>
</dbReference>
<sequence length="261" mass="27435">MEINREESDLTKYVKITNDTDLTASGTAQNNDAKIENSRLSIAIGHNALVKDSDTKYTHPKDKTPDNPAASIAVGANANVTESPYSIALGKNAKVLNSEYSLAAGTNAKVEKSEKAIVQGVEANATNSNISIVTDFAAKAENSKDVIVLGSKTESIRSNSTVALGNRTSVTDSDSAFVGGDHASATTSAGALVLGNGAKAKTVSLTADNGVLKAGDKTIFTEDNFKMLLKQLYTFEDGLKTKEKNGKTVVSLDKETIKQMA</sequence>
<feature type="chain" id="PRO_0000078109" description="Uncharacterized protein HI_1718">
    <location>
        <begin position="1"/>
        <end position="261"/>
    </location>
</feature>